<reference key="1">
    <citation type="journal article" date="2001" name="Nature">
        <title>Genome sequence of enterohaemorrhagic Escherichia coli O157:H7.</title>
        <authorList>
            <person name="Perna N.T."/>
            <person name="Plunkett G. III"/>
            <person name="Burland V."/>
            <person name="Mau B."/>
            <person name="Glasner J.D."/>
            <person name="Rose D.J."/>
            <person name="Mayhew G.F."/>
            <person name="Evans P.S."/>
            <person name="Gregor J."/>
            <person name="Kirkpatrick H.A."/>
            <person name="Posfai G."/>
            <person name="Hackett J."/>
            <person name="Klink S."/>
            <person name="Boutin A."/>
            <person name="Shao Y."/>
            <person name="Miller L."/>
            <person name="Grotbeck E.J."/>
            <person name="Davis N.W."/>
            <person name="Lim A."/>
            <person name="Dimalanta E.T."/>
            <person name="Potamousis K."/>
            <person name="Apodaca J."/>
            <person name="Anantharaman T.S."/>
            <person name="Lin J."/>
            <person name="Yen G."/>
            <person name="Schwartz D.C."/>
            <person name="Welch R.A."/>
            <person name="Blattner F.R."/>
        </authorList>
    </citation>
    <scope>NUCLEOTIDE SEQUENCE [LARGE SCALE GENOMIC DNA]</scope>
    <source>
        <strain>O157:H7 / EDL933 / ATCC 700927 / EHEC</strain>
    </source>
</reference>
<reference key="2">
    <citation type="journal article" date="2001" name="DNA Res.">
        <title>Complete genome sequence of enterohemorrhagic Escherichia coli O157:H7 and genomic comparison with a laboratory strain K-12.</title>
        <authorList>
            <person name="Hayashi T."/>
            <person name="Makino K."/>
            <person name="Ohnishi M."/>
            <person name="Kurokawa K."/>
            <person name="Ishii K."/>
            <person name="Yokoyama K."/>
            <person name="Han C.-G."/>
            <person name="Ohtsubo E."/>
            <person name="Nakayama K."/>
            <person name="Murata T."/>
            <person name="Tanaka M."/>
            <person name="Tobe T."/>
            <person name="Iida T."/>
            <person name="Takami H."/>
            <person name="Honda T."/>
            <person name="Sasakawa C."/>
            <person name="Ogasawara N."/>
            <person name="Yasunaga T."/>
            <person name="Kuhara S."/>
            <person name="Shiba T."/>
            <person name="Hattori M."/>
            <person name="Shinagawa H."/>
        </authorList>
    </citation>
    <scope>NUCLEOTIDE SEQUENCE [LARGE SCALE GENOMIC DNA]</scope>
    <source>
        <strain>O157:H7 / Sakai / RIMD 0509952 / EHEC</strain>
    </source>
</reference>
<proteinExistence type="inferred from homology"/>
<comment type="function">
    <text evidence="1">Electron transport system for the ribonucleotide reductase system NrdEF.</text>
</comment>
<comment type="similarity">
    <text evidence="3">Belongs to the glutaredoxin family.</text>
</comment>
<accession>P0AC67</accession>
<accession>Q47414</accession>
<evidence type="ECO:0000250" key="1"/>
<evidence type="ECO:0000255" key="2">
    <source>
        <dbReference type="PROSITE-ProRule" id="PRU00686"/>
    </source>
</evidence>
<evidence type="ECO:0000305" key="3"/>
<organism>
    <name type="scientific">Escherichia coli O157:H7</name>
    <dbReference type="NCBI Taxonomy" id="83334"/>
    <lineage>
        <taxon>Bacteria</taxon>
        <taxon>Pseudomonadati</taxon>
        <taxon>Pseudomonadota</taxon>
        <taxon>Gammaproteobacteria</taxon>
        <taxon>Enterobacterales</taxon>
        <taxon>Enterobacteriaceae</taxon>
        <taxon>Escherichia</taxon>
    </lineage>
</organism>
<dbReference type="EMBL" id="AE005174">
    <property type="protein sequence ID" value="AAG57783.1"/>
    <property type="molecule type" value="Genomic_DNA"/>
</dbReference>
<dbReference type="EMBL" id="BA000007">
    <property type="protein sequence ID" value="BAB36959.1"/>
    <property type="molecule type" value="Genomic_DNA"/>
</dbReference>
<dbReference type="PIR" id="C85915">
    <property type="entry name" value="C85915"/>
</dbReference>
<dbReference type="PIR" id="H91070">
    <property type="entry name" value="H91070"/>
</dbReference>
<dbReference type="RefSeq" id="NP_311563.1">
    <property type="nucleotide sequence ID" value="NC_002695.1"/>
</dbReference>
<dbReference type="RefSeq" id="WP_001223227.1">
    <property type="nucleotide sequence ID" value="NZ_VOAI01000003.1"/>
</dbReference>
<dbReference type="SMR" id="P0AC67"/>
<dbReference type="STRING" id="155864.Z3975"/>
<dbReference type="GeneID" id="914748"/>
<dbReference type="GeneID" id="93779337"/>
<dbReference type="KEGG" id="ece:Z3975"/>
<dbReference type="KEGG" id="ecs:ECs_3536"/>
<dbReference type="PATRIC" id="fig|386585.9.peg.3690"/>
<dbReference type="eggNOG" id="COG0695">
    <property type="taxonomic scope" value="Bacteria"/>
</dbReference>
<dbReference type="HOGENOM" id="CLU_026126_9_0_6"/>
<dbReference type="OMA" id="HWSGYRP"/>
<dbReference type="Proteomes" id="UP000000558">
    <property type="component" value="Chromosome"/>
</dbReference>
<dbReference type="Proteomes" id="UP000002519">
    <property type="component" value="Chromosome"/>
</dbReference>
<dbReference type="GO" id="GO:0009055">
    <property type="term" value="F:electron transfer activity"/>
    <property type="evidence" value="ECO:0007669"/>
    <property type="project" value="TreeGrafter"/>
</dbReference>
<dbReference type="GO" id="GO:0045454">
    <property type="term" value="P:cell redox homeostasis"/>
    <property type="evidence" value="ECO:0007669"/>
    <property type="project" value="InterPro"/>
</dbReference>
<dbReference type="CDD" id="cd02976">
    <property type="entry name" value="NrdH"/>
    <property type="match status" value="1"/>
</dbReference>
<dbReference type="FunFam" id="3.40.30.10:FF:000060">
    <property type="entry name" value="Glutaredoxin-like protein nrdH"/>
    <property type="match status" value="1"/>
</dbReference>
<dbReference type="Gene3D" id="3.40.30.10">
    <property type="entry name" value="Glutaredoxin"/>
    <property type="match status" value="1"/>
</dbReference>
<dbReference type="InterPro" id="IPR011909">
    <property type="entry name" value="GlrX_NrdH"/>
</dbReference>
<dbReference type="InterPro" id="IPR002109">
    <property type="entry name" value="Glutaredoxin"/>
</dbReference>
<dbReference type="InterPro" id="IPR051548">
    <property type="entry name" value="Grx-like_ET"/>
</dbReference>
<dbReference type="InterPro" id="IPR036249">
    <property type="entry name" value="Thioredoxin-like_sf"/>
</dbReference>
<dbReference type="NCBIfam" id="TIGR02194">
    <property type="entry name" value="GlrX_NrdH"/>
    <property type="match status" value="1"/>
</dbReference>
<dbReference type="NCBIfam" id="NF007657">
    <property type="entry name" value="PRK10329.1"/>
    <property type="match status" value="1"/>
</dbReference>
<dbReference type="PANTHER" id="PTHR34386">
    <property type="entry name" value="GLUTAREDOXIN"/>
    <property type="match status" value="1"/>
</dbReference>
<dbReference type="PANTHER" id="PTHR34386:SF1">
    <property type="entry name" value="GLUTAREDOXIN-LIKE PROTEIN NRDH"/>
    <property type="match status" value="1"/>
</dbReference>
<dbReference type="Pfam" id="PF00462">
    <property type="entry name" value="Glutaredoxin"/>
    <property type="match status" value="1"/>
</dbReference>
<dbReference type="SUPFAM" id="SSF52833">
    <property type="entry name" value="Thioredoxin-like"/>
    <property type="match status" value="1"/>
</dbReference>
<dbReference type="PROSITE" id="PS51354">
    <property type="entry name" value="GLUTAREDOXIN_2"/>
    <property type="match status" value="1"/>
</dbReference>
<gene>
    <name type="primary">nrdH</name>
    <name type="ordered locus">Z3975</name>
    <name type="ordered locus">ECs3536</name>
</gene>
<sequence>MRITIYTRNDCVQCHATKRAMENRGFDFEMINVDRVPEAAEALRAQGFRQLPVVIAGDLSWSGFRPDMINRLHPAPHAASA</sequence>
<keyword id="KW-1015">Disulfide bond</keyword>
<keyword id="KW-0249">Electron transport</keyword>
<keyword id="KW-0676">Redox-active center</keyword>
<keyword id="KW-1185">Reference proteome</keyword>
<keyword id="KW-0813">Transport</keyword>
<name>NRDH_ECO57</name>
<feature type="chain" id="PRO_0000141639" description="Glutaredoxin-like protein NrdH">
    <location>
        <begin position="1"/>
        <end position="81"/>
    </location>
</feature>
<feature type="domain" description="Glutaredoxin" evidence="2">
    <location>
        <begin position="1"/>
        <end position="81"/>
    </location>
</feature>
<feature type="disulfide bond" description="Redox-active" evidence="1">
    <location>
        <begin position="11"/>
        <end position="14"/>
    </location>
</feature>
<protein>
    <recommendedName>
        <fullName>Glutaredoxin-like protein NrdH</fullName>
    </recommendedName>
</protein>